<evidence type="ECO:0000255" key="1">
    <source>
        <dbReference type="HAMAP-Rule" id="MF_01370"/>
    </source>
</evidence>
<evidence type="ECO:0000256" key="2">
    <source>
        <dbReference type="SAM" id="MobiDB-lite"/>
    </source>
</evidence>
<feature type="chain" id="PRO_0000271572" description="Photosystem II reaction center Psb28 protein">
    <location>
        <begin position="1"/>
        <end position="127"/>
    </location>
</feature>
<feature type="region of interest" description="Disordered" evidence="2">
    <location>
        <begin position="107"/>
        <end position="127"/>
    </location>
</feature>
<feature type="compositionally biased region" description="Polar residues" evidence="2">
    <location>
        <begin position="109"/>
        <end position="118"/>
    </location>
</feature>
<organism>
    <name type="scientific">Parasynechococcus marenigrum (strain WH8102)</name>
    <dbReference type="NCBI Taxonomy" id="84588"/>
    <lineage>
        <taxon>Bacteria</taxon>
        <taxon>Bacillati</taxon>
        <taxon>Cyanobacteriota</taxon>
        <taxon>Cyanophyceae</taxon>
        <taxon>Synechococcales</taxon>
        <taxon>Prochlorococcaceae</taxon>
        <taxon>Parasynechococcus</taxon>
        <taxon>Parasynechococcus marenigrum</taxon>
    </lineage>
</organism>
<gene>
    <name evidence="1" type="primary">psb28</name>
    <name type="ordered locus">SYNW1065</name>
</gene>
<keyword id="KW-0472">Membrane</keyword>
<keyword id="KW-0602">Photosynthesis</keyword>
<keyword id="KW-0604">Photosystem II</keyword>
<keyword id="KW-0793">Thylakoid</keyword>
<protein>
    <recommendedName>
        <fullName evidence="1">Photosystem II reaction center Psb28 protein</fullName>
    </recommendedName>
    <alternativeName>
        <fullName evidence="1">Photosystem II 13 kDa protein</fullName>
    </alternativeName>
    <alternativeName>
        <fullName evidence="1">Photosystem II reaction center W protein</fullName>
    </alternativeName>
</protein>
<comment type="subunit">
    <text evidence="1">Part of the photosystem II complex.</text>
</comment>
<comment type="subcellular location">
    <subcellularLocation>
        <location evidence="1">Cellular thylakoid membrane</location>
        <topology evidence="1">Peripheral membrane protein</topology>
        <orientation evidence="1">Cytoplasmic side</orientation>
    </subcellularLocation>
</comment>
<comment type="similarity">
    <text evidence="1">Belongs to the Psb28 family.</text>
</comment>
<reference key="1">
    <citation type="journal article" date="2003" name="Nature">
        <title>The genome of a motile marine Synechococcus.</title>
        <authorList>
            <person name="Palenik B."/>
            <person name="Brahamsha B."/>
            <person name="Larimer F.W."/>
            <person name="Land M.L."/>
            <person name="Hauser L."/>
            <person name="Chain P."/>
            <person name="Lamerdin J.E."/>
            <person name="Regala W."/>
            <person name="Allen E.E."/>
            <person name="McCarren J."/>
            <person name="Paulsen I.T."/>
            <person name="Dufresne A."/>
            <person name="Partensky F."/>
            <person name="Webb E.A."/>
            <person name="Waterbury J."/>
        </authorList>
    </citation>
    <scope>NUCLEOTIDE SEQUENCE [LARGE SCALE GENOMIC DNA]</scope>
    <source>
        <strain>WH8102</strain>
    </source>
</reference>
<accession>Q7U7C0</accession>
<sequence>MAKASIQFFRGVDEPVVPDIRLTRSRDGLTGQATFRFEQPAAIAPETMGDITGMWMVDEEGEMVTREINGKFVNGTASALEAVYSWKSVQDFERFMRFAQRYAEANGLGYSQNQNSDQTDGDANAEA</sequence>
<proteinExistence type="inferred from homology"/>
<dbReference type="EMBL" id="BX569692">
    <property type="protein sequence ID" value="CAE07580.1"/>
    <property type="molecule type" value="Genomic_DNA"/>
</dbReference>
<dbReference type="RefSeq" id="WP_011127930.1">
    <property type="nucleotide sequence ID" value="NC_005070.1"/>
</dbReference>
<dbReference type="SMR" id="Q7U7C0"/>
<dbReference type="STRING" id="84588.SYNW1065"/>
<dbReference type="KEGG" id="syw:SYNW1065"/>
<dbReference type="eggNOG" id="ENOG5031GDS">
    <property type="taxonomic scope" value="Bacteria"/>
</dbReference>
<dbReference type="HOGENOM" id="CLU_137323_1_0_3"/>
<dbReference type="Proteomes" id="UP000001422">
    <property type="component" value="Chromosome"/>
</dbReference>
<dbReference type="GO" id="GO:0009654">
    <property type="term" value="C:photosystem II oxygen evolving complex"/>
    <property type="evidence" value="ECO:0007669"/>
    <property type="project" value="InterPro"/>
</dbReference>
<dbReference type="GO" id="GO:0031676">
    <property type="term" value="C:plasma membrane-derived thylakoid membrane"/>
    <property type="evidence" value="ECO:0007669"/>
    <property type="project" value="UniProtKB-SubCell"/>
</dbReference>
<dbReference type="GO" id="GO:0015979">
    <property type="term" value="P:photosynthesis"/>
    <property type="evidence" value="ECO:0007669"/>
    <property type="project" value="UniProtKB-UniRule"/>
</dbReference>
<dbReference type="Gene3D" id="2.40.30.220">
    <property type="entry name" value="Photosystem II Psb28"/>
    <property type="match status" value="1"/>
</dbReference>
<dbReference type="HAMAP" id="MF_01370">
    <property type="entry name" value="PSII_Psb28"/>
    <property type="match status" value="1"/>
</dbReference>
<dbReference type="InterPro" id="IPR038676">
    <property type="entry name" value="Psb28_c1_sf"/>
</dbReference>
<dbReference type="InterPro" id="IPR005610">
    <property type="entry name" value="PSII_Psb28_class-1"/>
</dbReference>
<dbReference type="NCBIfam" id="TIGR03047">
    <property type="entry name" value="PS_II_psb28"/>
    <property type="match status" value="1"/>
</dbReference>
<dbReference type="PANTHER" id="PTHR34963">
    <property type="match status" value="1"/>
</dbReference>
<dbReference type="PANTHER" id="PTHR34963:SF2">
    <property type="entry name" value="PHOTOSYSTEM II REACTION CENTER PSB28 PROTEIN, CHLOROPLASTIC"/>
    <property type="match status" value="1"/>
</dbReference>
<dbReference type="Pfam" id="PF03912">
    <property type="entry name" value="Psb28"/>
    <property type="match status" value="1"/>
</dbReference>
<name>PSB28_PARMW</name>